<feature type="chain" id="PRO_0000435974" description="Cell pattern formation-associated protein STUA">
    <location>
        <begin position="1"/>
        <end position="550"/>
    </location>
</feature>
<feature type="domain" description="HTH APSES-type" evidence="2">
    <location>
        <begin position="86"/>
        <end position="192"/>
    </location>
</feature>
<feature type="DNA-binding region" description="H-T-H motif" evidence="2">
    <location>
        <begin position="120"/>
        <end position="141"/>
    </location>
</feature>
<feature type="region of interest" description="Disordered" evidence="3">
    <location>
        <begin position="246"/>
        <end position="277"/>
    </location>
</feature>
<feature type="region of interest" description="Disordered" evidence="3">
    <location>
        <begin position="371"/>
        <end position="412"/>
    </location>
</feature>
<feature type="region of interest" description="Disordered" evidence="3">
    <location>
        <begin position="447"/>
        <end position="467"/>
    </location>
</feature>
<feature type="region of interest" description="Nuclear localization domain" evidence="1">
    <location>
        <begin position="517"/>
        <end position="546"/>
    </location>
</feature>
<feature type="region of interest" description="Disordered" evidence="3">
    <location>
        <begin position="527"/>
        <end position="550"/>
    </location>
</feature>
<feature type="compositionally biased region" description="Polar residues" evidence="3">
    <location>
        <begin position="246"/>
        <end position="266"/>
    </location>
</feature>
<feature type="compositionally biased region" description="Basic and acidic residues" evidence="3">
    <location>
        <begin position="385"/>
        <end position="395"/>
    </location>
</feature>
<dbReference type="EMBL" id="AB180746">
    <property type="protein sequence ID" value="BAD21357.1"/>
    <property type="molecule type" value="Genomic_DNA"/>
</dbReference>
<dbReference type="SMR" id="Q6L612"/>
<dbReference type="VEuPathDB" id="FungiDB:FOC1_g10012715"/>
<dbReference type="VEuPathDB" id="FungiDB:FOC4_g10013712"/>
<dbReference type="VEuPathDB" id="FungiDB:FOIG_07247"/>
<dbReference type="VEuPathDB" id="FungiDB:FOMG_06664"/>
<dbReference type="VEuPathDB" id="FungiDB:FOXG_05278"/>
<dbReference type="VEuPathDB" id="FungiDB:FOZG_11054"/>
<dbReference type="VEuPathDB" id="FungiDB:HZS61_003862"/>
<dbReference type="OrthoDB" id="5407653at2759"/>
<dbReference type="PhylomeDB" id="Q6L612"/>
<dbReference type="GO" id="GO:0005634">
    <property type="term" value="C:nucleus"/>
    <property type="evidence" value="ECO:0007669"/>
    <property type="project" value="UniProtKB-SubCell"/>
</dbReference>
<dbReference type="GO" id="GO:0003700">
    <property type="term" value="F:DNA-binding transcription factor activity"/>
    <property type="evidence" value="ECO:0007669"/>
    <property type="project" value="TreeGrafter"/>
</dbReference>
<dbReference type="GO" id="GO:0043565">
    <property type="term" value="F:sequence-specific DNA binding"/>
    <property type="evidence" value="ECO:0007669"/>
    <property type="project" value="TreeGrafter"/>
</dbReference>
<dbReference type="GO" id="GO:0048315">
    <property type="term" value="P:conidium formation"/>
    <property type="evidence" value="ECO:0007669"/>
    <property type="project" value="UniProtKB-KW"/>
</dbReference>
<dbReference type="GO" id="GO:0045944">
    <property type="term" value="P:positive regulation of transcription by RNA polymerase II"/>
    <property type="evidence" value="ECO:0007669"/>
    <property type="project" value="TreeGrafter"/>
</dbReference>
<dbReference type="GO" id="GO:0030435">
    <property type="term" value="P:sporulation resulting in formation of a cellular spore"/>
    <property type="evidence" value="ECO:0007669"/>
    <property type="project" value="UniProtKB-KW"/>
</dbReference>
<dbReference type="FunFam" id="3.10.260.10:FF:000003">
    <property type="entry name" value="Ascospore maturation 1 protein"/>
    <property type="match status" value="1"/>
</dbReference>
<dbReference type="Gene3D" id="3.10.260.10">
    <property type="entry name" value="Transcription regulator HTH, APSES-type DNA-binding domain"/>
    <property type="match status" value="1"/>
</dbReference>
<dbReference type="InterPro" id="IPR029790">
    <property type="entry name" value="EFG1/Phd1/StuA"/>
</dbReference>
<dbReference type="InterPro" id="IPR036887">
    <property type="entry name" value="HTH_APSES_sf"/>
</dbReference>
<dbReference type="InterPro" id="IPR018004">
    <property type="entry name" value="KilA/APSES_HTH"/>
</dbReference>
<dbReference type="InterPro" id="IPR003163">
    <property type="entry name" value="Tscrpt_reg_HTH_APSES-type"/>
</dbReference>
<dbReference type="PANTHER" id="PTHR47792">
    <property type="entry name" value="PROTEIN SOK2-RELATED"/>
    <property type="match status" value="1"/>
</dbReference>
<dbReference type="PANTHER" id="PTHR47792:SF1">
    <property type="entry name" value="PROTEIN SOK2-RELATED"/>
    <property type="match status" value="1"/>
</dbReference>
<dbReference type="Pfam" id="PF04383">
    <property type="entry name" value="KilA-N"/>
    <property type="match status" value="1"/>
</dbReference>
<dbReference type="SMART" id="SM01252">
    <property type="entry name" value="KilA-N"/>
    <property type="match status" value="1"/>
</dbReference>
<dbReference type="SUPFAM" id="SSF54616">
    <property type="entry name" value="DNA-binding domain of Mlu1-box binding protein MBP1"/>
    <property type="match status" value="1"/>
</dbReference>
<dbReference type="PROSITE" id="PS51299">
    <property type="entry name" value="HTH_APSES"/>
    <property type="match status" value="1"/>
</dbReference>
<protein>
    <recommendedName>
        <fullName evidence="6">Cell pattern formation-associated protein STUA</fullName>
    </recommendedName>
    <alternativeName>
        <fullName evidence="1">Stunted protein A</fullName>
    </alternativeName>
</protein>
<accession>Q6L612</accession>
<sequence length="550" mass="59651">MNQGHPQPDMYYSPHYSTPQYGYGYSTNGAPTTAVSTPMPAPQNVLPVPSALSNQGAMQQPGYSNSSNNGAFDTTGQHNPPGMKPRVTATLWEDEGSLCFQVEARGICVARREDNHMINGTKLLNVAGMTRGRRDGILKSEKVRHVVKIGPMHLKGVWIPYDRALDFANKEKITELLFPLFVHNIGALLYHPSNSNRTSQVMAAAERRKHEGLGGQRPAAPNALPSIGQHHPMMPGLPTGGYVPQSLANGPQSLASTPQPLTNGSQPPMPNGGGMLKRGREEEEDLHRPVSNGHDPMSNMHAMSNGYPQQPPLANVHQPPMQNGGDMLKRGRDEDDEVHRSAHTAHDTMNNMPGSMPGLSNAYAQPLPNVHHQPLANGDGGMLKRGRDEDDDVHRSSPNGHDSAGNFEVKRRKTITSNDSMVSPGGFYTLHNGYGQPGVMNGMSPYKRRDDEAETPRPGPNVHDHLNNFDLKRHKTMETSVPAPQYDAMNRPHSSIGTSPTYAPAPVYDNLARPASTVAASPSYPSAPVYDTGARPPSAISAPRRQQSFG</sequence>
<gene>
    <name evidence="5" type="primary">STUA</name>
</gene>
<proteinExistence type="inferred from homology"/>
<reference key="1">
    <citation type="journal article" date="2004" name="Eukaryot. Cell">
        <title>FoSTUA, encoding a basic helix-loop-helix protein, differentially regulates development of three kinds of asexual spores, macroconidia, microconidia, and chlamydospores, in the fungal plant pathogen Fusarium oxysporum.</title>
        <authorList>
            <person name="Ohara T."/>
            <person name="Tsuge T."/>
        </authorList>
    </citation>
    <scope>NUCLEOTIDE SEQUENCE [GENOMIC DNA]</scope>
    <scope>FUNCTION</scope>
    <scope>DISRUPTION PHENOTYPE</scope>
    <scope>SUBCELLULAR LOCATION</scope>
    <source>
        <strain>Mel02010</strain>
    </source>
</reference>
<name>STUA_FUSOX</name>
<keyword id="KW-0183">Conidiation</keyword>
<keyword id="KW-0238">DNA-binding</keyword>
<keyword id="KW-0539">Nucleus</keyword>
<keyword id="KW-0749">Sporulation</keyword>
<keyword id="KW-0804">Transcription</keyword>
<keyword id="KW-0805">Transcription regulation</keyword>
<comment type="function">
    <text evidence="1 4">Transcription factor that regulates asexual reproduction (PubMed:15590816). Binds the StuA-response elements (StRE) with the consensus sequence 5'-(A/T)CGCG(T/A)N(A/C)-3' at the promoters of target genes (By similarity). Differentially regulates the development of macroconidia, microconidia, and chlamydospores (PubMed:15590816). Acts as a positive regulator for the development of macroconidia and as a negative regulator for the development of chlamydospores (PubMed:15590816). Involved in microconidium formation specifically in infected plants (PubMed:15590816).</text>
</comment>
<comment type="subcellular location">
    <subcellularLocation>
        <location evidence="4">Nucleus</location>
    </subcellularLocation>
</comment>
<comment type="disruption phenotype">
    <text evidence="4">Lacks conidiophores and produces macroconidia at low frequencies only from intercalary phialides (PubMed:15590816). Produces markedly fewer macroconidia and microconidia in infected plants but does not affect the disease-causing ability (PubMed:15590816).</text>
</comment>
<comment type="similarity">
    <text evidence="6">Belongs to the EFG1/PHD1/stuA family.</text>
</comment>
<organism>
    <name type="scientific">Fusarium oxysporum</name>
    <name type="common">Fusarium vascular wilt</name>
    <dbReference type="NCBI Taxonomy" id="5507"/>
    <lineage>
        <taxon>Eukaryota</taxon>
        <taxon>Fungi</taxon>
        <taxon>Dikarya</taxon>
        <taxon>Ascomycota</taxon>
        <taxon>Pezizomycotina</taxon>
        <taxon>Sordariomycetes</taxon>
        <taxon>Hypocreomycetidae</taxon>
        <taxon>Hypocreales</taxon>
        <taxon>Nectriaceae</taxon>
        <taxon>Fusarium</taxon>
        <taxon>Fusarium oxysporum species complex</taxon>
    </lineage>
</organism>
<evidence type="ECO:0000250" key="1">
    <source>
        <dbReference type="UniProtKB" id="P36011"/>
    </source>
</evidence>
<evidence type="ECO:0000255" key="2">
    <source>
        <dbReference type="PROSITE-ProRule" id="PRU00630"/>
    </source>
</evidence>
<evidence type="ECO:0000256" key="3">
    <source>
        <dbReference type="SAM" id="MobiDB-lite"/>
    </source>
</evidence>
<evidence type="ECO:0000269" key="4">
    <source>
    </source>
</evidence>
<evidence type="ECO:0000303" key="5">
    <source>
    </source>
</evidence>
<evidence type="ECO:0000305" key="6"/>